<name>ES2R_PELRI</name>
<reference evidence="7" key="1">
    <citation type="journal article" date="2008" name="Rapid Commun. Mass Spectrom.">
        <title>De novo sequencing of peptides secreted by the skin glands of the caucasian green frog Rana ridibunda.</title>
        <authorList>
            <person name="Samgina T.Y."/>
            <person name="Artemenko K.A."/>
            <person name="Gorshkov V.A."/>
            <person name="Ogourtsov S.V."/>
            <person name="Zubarev R.A."/>
            <person name="Lebedev A.T."/>
        </authorList>
    </citation>
    <scope>PROTEIN SEQUENCE</scope>
    <scope>SUBCELLULAR LOCATION</scope>
    <scope>MASS SPECTROMETRY</scope>
    <scope>DISULFIDE BOND</scope>
    <source>
        <tissue evidence="5">Skin secretion</tissue>
    </source>
</reference>
<reference key="2">
    <citation type="journal article" date="2017" name="Anal. Bioanal. Chem.">
        <title>Differentiation of frogs from two populations belonging to the Pelophylax esculentus complex by LC-MS/MS comparison of their skin peptidomes.</title>
        <authorList>
            <person name="Samgina T.Y."/>
            <person name="Artemenko K.A."/>
            <person name="Bergquist J."/>
            <person name="Trebse P."/>
            <person name="Torkar G."/>
            <person name="Tolpina M.D."/>
            <person name="Lebedev A.T."/>
        </authorList>
    </citation>
    <scope>PROTEIN SEQUENCE</scope>
    <scope>SUBCELLULAR LOCATION</scope>
    <scope>DISULFIDE BOND</scope>
    <scope>MASS SPECTROMETRY</scope>
    <scope>IDENTIFICATION BY MASS SPECTROMETRY</scope>
    <source>
        <tissue evidence="6">Skin secretion</tissue>
    </source>
</reference>
<dbReference type="GO" id="GO:0005576">
    <property type="term" value="C:extracellular region"/>
    <property type="evidence" value="ECO:0007669"/>
    <property type="project" value="UniProtKB-SubCell"/>
</dbReference>
<dbReference type="GO" id="GO:0042742">
    <property type="term" value="P:defense response to bacterium"/>
    <property type="evidence" value="ECO:0007669"/>
    <property type="project" value="UniProtKB-KW"/>
</dbReference>
<dbReference type="InterPro" id="IPR012521">
    <property type="entry name" value="Antimicrobial_frog_2"/>
</dbReference>
<dbReference type="Pfam" id="PF08023">
    <property type="entry name" value="Antimicrobial_2"/>
    <property type="match status" value="1"/>
</dbReference>
<accession>P86016</accession>
<evidence type="ECO:0000250" key="1">
    <source>
        <dbReference type="UniProtKB" id="P40845"/>
    </source>
</evidence>
<evidence type="ECO:0000255" key="2"/>
<evidence type="ECO:0000269" key="3">
    <source>
    </source>
</evidence>
<evidence type="ECO:0000269" key="4">
    <source>
    </source>
</evidence>
<evidence type="ECO:0000303" key="5">
    <source>
    </source>
</evidence>
<evidence type="ECO:0000303" key="6">
    <source>
    </source>
</evidence>
<evidence type="ECO:0000305" key="7"/>
<evidence type="ECO:0000305" key="8">
    <source>
    </source>
</evidence>
<feature type="peptide" id="PRO_0000361074" description="Esculentin-2R" evidence="3 4">
    <location>
        <begin position="1"/>
        <end position="36"/>
    </location>
</feature>
<feature type="disulfide bond" evidence="3 4">
    <location>
        <begin position="30"/>
        <end position="36"/>
    </location>
</feature>
<keyword id="KW-0878">Amphibian defense peptide</keyword>
<keyword id="KW-0044">Antibiotic</keyword>
<keyword id="KW-0929">Antimicrobial</keyword>
<keyword id="KW-0903">Direct protein sequencing</keyword>
<keyword id="KW-1015">Disulfide bond</keyword>
<keyword id="KW-0964">Secreted</keyword>
<comment type="function">
    <text evidence="1">Antimicrobial peptide.</text>
</comment>
<comment type="subcellular location">
    <subcellularLocation>
        <location evidence="3 4">Secreted</location>
    </subcellularLocation>
</comment>
<comment type="tissue specificity">
    <text evidence="8">Expressed by the skin glands.</text>
</comment>
<comment type="mass spectrometry"/>
<comment type="mass spectrometry"/>
<comment type="similarity">
    <text evidence="2">Belongs to the frog skin active peptide (FSAP) family. Esculentin subfamily.</text>
</comment>
<sequence>GILSLVKVAKLAGKTFAKEGGKFGLEFIACKVTNQC</sequence>
<organism>
    <name type="scientific">Pelophylax ridibundus</name>
    <name type="common">Marsh frog</name>
    <name type="synonym">Rana ridibunda</name>
    <dbReference type="NCBI Taxonomy" id="8406"/>
    <lineage>
        <taxon>Eukaryota</taxon>
        <taxon>Metazoa</taxon>
        <taxon>Chordata</taxon>
        <taxon>Craniata</taxon>
        <taxon>Vertebrata</taxon>
        <taxon>Euteleostomi</taxon>
        <taxon>Amphibia</taxon>
        <taxon>Batrachia</taxon>
        <taxon>Anura</taxon>
        <taxon>Neobatrachia</taxon>
        <taxon>Ranoidea</taxon>
        <taxon>Ranidae</taxon>
        <taxon>Pelophylax</taxon>
    </lineage>
</organism>
<proteinExistence type="evidence at protein level"/>
<protein>
    <recommendedName>
        <fullName evidence="5">Esculentin-2R</fullName>
    </recommendedName>
</protein>